<dbReference type="EC" id="5.3.1.14" evidence="1"/>
<dbReference type="EMBL" id="CU928158">
    <property type="protein sequence ID" value="CAQ91303.1"/>
    <property type="molecule type" value="Genomic_DNA"/>
</dbReference>
<dbReference type="RefSeq" id="WP_015953876.1">
    <property type="nucleotide sequence ID" value="NC_011740.1"/>
</dbReference>
<dbReference type="SMR" id="B7LVE0"/>
<dbReference type="GeneID" id="75059462"/>
<dbReference type="KEGG" id="efe:EFER_3868"/>
<dbReference type="HOGENOM" id="CLU_052790_0_0_6"/>
<dbReference type="OrthoDB" id="9766697at2"/>
<dbReference type="UniPathway" id="UPA00541">
    <property type="reaction ID" value="UER00601"/>
</dbReference>
<dbReference type="Proteomes" id="UP000000745">
    <property type="component" value="Chromosome"/>
</dbReference>
<dbReference type="GO" id="GO:0005737">
    <property type="term" value="C:cytoplasm"/>
    <property type="evidence" value="ECO:0007669"/>
    <property type="project" value="UniProtKB-SubCell"/>
</dbReference>
<dbReference type="GO" id="GO:0008740">
    <property type="term" value="F:L-rhamnose isomerase activity"/>
    <property type="evidence" value="ECO:0007669"/>
    <property type="project" value="UniProtKB-UniRule"/>
</dbReference>
<dbReference type="GO" id="GO:0030145">
    <property type="term" value="F:manganese ion binding"/>
    <property type="evidence" value="ECO:0007669"/>
    <property type="project" value="UniProtKB-UniRule"/>
</dbReference>
<dbReference type="GO" id="GO:0019324">
    <property type="term" value="P:L-lyxose metabolic process"/>
    <property type="evidence" value="ECO:0007669"/>
    <property type="project" value="TreeGrafter"/>
</dbReference>
<dbReference type="GO" id="GO:0019301">
    <property type="term" value="P:rhamnose catabolic process"/>
    <property type="evidence" value="ECO:0007669"/>
    <property type="project" value="UniProtKB-UniRule"/>
</dbReference>
<dbReference type="FunFam" id="3.20.20.150:FF:000006">
    <property type="entry name" value="L-rhamnose isomerase"/>
    <property type="match status" value="1"/>
</dbReference>
<dbReference type="Gene3D" id="3.20.20.150">
    <property type="entry name" value="Divalent-metal-dependent TIM barrel enzymes"/>
    <property type="match status" value="1"/>
</dbReference>
<dbReference type="HAMAP" id="MF_00541">
    <property type="entry name" value="RhaA"/>
    <property type="match status" value="1"/>
</dbReference>
<dbReference type="InterPro" id="IPR050337">
    <property type="entry name" value="L-rhamnose_isomerase"/>
</dbReference>
<dbReference type="InterPro" id="IPR009308">
    <property type="entry name" value="Rhamnose_isomerase"/>
</dbReference>
<dbReference type="InterPro" id="IPR036237">
    <property type="entry name" value="Xyl_isomerase-like_sf"/>
</dbReference>
<dbReference type="NCBIfam" id="NF002203">
    <property type="entry name" value="PRK01076.1"/>
    <property type="match status" value="1"/>
</dbReference>
<dbReference type="NCBIfam" id="TIGR01748">
    <property type="entry name" value="rhaA"/>
    <property type="match status" value="1"/>
</dbReference>
<dbReference type="PANTHER" id="PTHR30268">
    <property type="entry name" value="L-RHAMNOSE ISOMERASE"/>
    <property type="match status" value="1"/>
</dbReference>
<dbReference type="PANTHER" id="PTHR30268:SF0">
    <property type="entry name" value="L-RHAMNOSE ISOMERASE"/>
    <property type="match status" value="1"/>
</dbReference>
<dbReference type="Pfam" id="PF06134">
    <property type="entry name" value="RhaA"/>
    <property type="match status" value="1"/>
</dbReference>
<dbReference type="SUPFAM" id="SSF51658">
    <property type="entry name" value="Xylose isomerase-like"/>
    <property type="match status" value="1"/>
</dbReference>
<reference key="1">
    <citation type="journal article" date="2009" name="PLoS Genet.">
        <title>Organised genome dynamics in the Escherichia coli species results in highly diverse adaptive paths.</title>
        <authorList>
            <person name="Touchon M."/>
            <person name="Hoede C."/>
            <person name="Tenaillon O."/>
            <person name="Barbe V."/>
            <person name="Baeriswyl S."/>
            <person name="Bidet P."/>
            <person name="Bingen E."/>
            <person name="Bonacorsi S."/>
            <person name="Bouchier C."/>
            <person name="Bouvet O."/>
            <person name="Calteau A."/>
            <person name="Chiapello H."/>
            <person name="Clermont O."/>
            <person name="Cruveiller S."/>
            <person name="Danchin A."/>
            <person name="Diard M."/>
            <person name="Dossat C."/>
            <person name="Karoui M.E."/>
            <person name="Frapy E."/>
            <person name="Garry L."/>
            <person name="Ghigo J.M."/>
            <person name="Gilles A.M."/>
            <person name="Johnson J."/>
            <person name="Le Bouguenec C."/>
            <person name="Lescat M."/>
            <person name="Mangenot S."/>
            <person name="Martinez-Jehanne V."/>
            <person name="Matic I."/>
            <person name="Nassif X."/>
            <person name="Oztas S."/>
            <person name="Petit M.A."/>
            <person name="Pichon C."/>
            <person name="Rouy Z."/>
            <person name="Ruf C.S."/>
            <person name="Schneider D."/>
            <person name="Tourret J."/>
            <person name="Vacherie B."/>
            <person name="Vallenet D."/>
            <person name="Medigue C."/>
            <person name="Rocha E.P.C."/>
            <person name="Denamur E."/>
        </authorList>
    </citation>
    <scope>NUCLEOTIDE SEQUENCE [LARGE SCALE GENOMIC DNA]</scope>
    <source>
        <strain>ATCC 35469 / DSM 13698 / BCRC 15582 / CCUG 18766 / IAM 14443 / JCM 21226 / LMG 7866 / NBRC 102419 / NCTC 12128 / CDC 0568-73</strain>
    </source>
</reference>
<name>RHAA_ESCF3</name>
<comment type="function">
    <text evidence="1">Catalyzes the interconversion of L-rhamnose and L-rhamnulose.</text>
</comment>
<comment type="catalytic activity">
    <reaction evidence="1">
        <text>L-rhamnopyranose = L-rhamnulose</text>
        <dbReference type="Rhea" id="RHEA:23160"/>
        <dbReference type="ChEBI" id="CHEBI:17897"/>
        <dbReference type="ChEBI" id="CHEBI:62346"/>
        <dbReference type="EC" id="5.3.1.14"/>
    </reaction>
</comment>
<comment type="cofactor">
    <cofactor evidence="1">
        <name>Mn(2+)</name>
        <dbReference type="ChEBI" id="CHEBI:29035"/>
    </cofactor>
    <text evidence="1">Binds 1 Mn(2+) ion per subunit.</text>
</comment>
<comment type="pathway">
    <text evidence="1">Carbohydrate degradation; L-rhamnose degradation; glycerone phosphate from L-rhamnose: step 1/3.</text>
</comment>
<comment type="subunit">
    <text evidence="1">Homotetramer.</text>
</comment>
<comment type="subcellular location">
    <subcellularLocation>
        <location evidence="1">Cytoplasm</location>
    </subcellularLocation>
</comment>
<comment type="similarity">
    <text evidence="1">Belongs to the rhamnose isomerase family.</text>
</comment>
<evidence type="ECO:0000255" key="1">
    <source>
        <dbReference type="HAMAP-Rule" id="MF_00541"/>
    </source>
</evidence>
<organism>
    <name type="scientific">Escherichia fergusonii (strain ATCC 35469 / DSM 13698 / CCUG 18766 / IAM 14443 / JCM 21226 / LMG 7866 / NBRC 102419 / NCTC 12128 / CDC 0568-73)</name>
    <dbReference type="NCBI Taxonomy" id="585054"/>
    <lineage>
        <taxon>Bacteria</taxon>
        <taxon>Pseudomonadati</taxon>
        <taxon>Pseudomonadota</taxon>
        <taxon>Gammaproteobacteria</taxon>
        <taxon>Enterobacterales</taxon>
        <taxon>Enterobacteriaceae</taxon>
        <taxon>Escherichia</taxon>
    </lineage>
</organism>
<protein>
    <recommendedName>
        <fullName evidence="1">L-rhamnose isomerase</fullName>
        <ecNumber evidence="1">5.3.1.14</ecNumber>
    </recommendedName>
</protein>
<feature type="chain" id="PRO_1000128884" description="L-rhamnose isomerase">
    <location>
        <begin position="1"/>
        <end position="419"/>
    </location>
</feature>
<feature type="binding site" evidence="1">
    <location>
        <position position="262"/>
    </location>
    <ligand>
        <name>Mn(2+)</name>
        <dbReference type="ChEBI" id="CHEBI:29035"/>
    </ligand>
</feature>
<feature type="binding site" evidence="1">
    <location>
        <position position="294"/>
    </location>
    <ligand>
        <name>Mn(2+)</name>
        <dbReference type="ChEBI" id="CHEBI:29035"/>
    </ligand>
</feature>
<feature type="binding site" evidence="1">
    <location>
        <position position="296"/>
    </location>
    <ligand>
        <name>Mn(2+)</name>
        <dbReference type="ChEBI" id="CHEBI:29035"/>
    </ligand>
</feature>
<sequence>MTTQLEQAWELAKQRFAAVGIDVEEALRQLDRLPVSMHCWQGDDVSGFENPEGSLTGGIQATGNYPGKARNASELRADLEQAMRLIPGPKRLNLHAIYLESDTPVARDQIKPEHFKNWVEWAKANQLGLDFNPSCFSHPLSADGFTLSHADDSIRQFWIDHCKASRRVSAYFGEQLGTPSVMNIWIPDGMKDITVDRLAPRQRLLAALDEVISEKLDPAHHIDAVESKLFGIGAESYTVGSNEFYMGYATSRQTALCLDAGHFHPTEVISDKISAAMLYVPQLLLHVSRPVRWDSDHVVLLDDETQAIASEIVRHDLFDRVHIGLDFFDASINRIAAWVIGTRNMKKALLRALLEPTTELRKLEAAGDYTARLALLEEQKSLPWQAVWEMYCQRHDTPAGSEWLESVRAYEKAILSQRG</sequence>
<gene>
    <name evidence="1" type="primary">rhaA</name>
    <name type="ordered locus">EFER_3868</name>
</gene>
<keyword id="KW-0963">Cytoplasm</keyword>
<keyword id="KW-0413">Isomerase</keyword>
<keyword id="KW-0464">Manganese</keyword>
<keyword id="KW-0479">Metal-binding</keyword>
<keyword id="KW-0684">Rhamnose metabolism</keyword>
<accession>B7LVE0</accession>
<proteinExistence type="inferred from homology"/>